<gene>
    <name evidence="1" type="primary">eif2g</name>
    <name type="ordered locus">Hlac_2398</name>
</gene>
<keyword id="KW-0342">GTP-binding</keyword>
<keyword id="KW-0378">Hydrolase</keyword>
<keyword id="KW-0396">Initiation factor</keyword>
<keyword id="KW-0460">Magnesium</keyword>
<keyword id="KW-0479">Metal-binding</keyword>
<keyword id="KW-0547">Nucleotide-binding</keyword>
<keyword id="KW-0648">Protein biosynthesis</keyword>
<keyword id="KW-1185">Reference proteome</keyword>
<reference key="1">
    <citation type="journal article" date="2016" name="Stand. Genomic Sci.">
        <title>Complete genome sequence of the Antarctic Halorubrum lacusprofundi type strain ACAM 34.</title>
        <authorList>
            <person name="Anderson I.J."/>
            <person name="DasSarma P."/>
            <person name="Lucas S."/>
            <person name="Copeland A."/>
            <person name="Lapidus A."/>
            <person name="Del Rio T.G."/>
            <person name="Tice H."/>
            <person name="Dalin E."/>
            <person name="Bruce D.C."/>
            <person name="Goodwin L."/>
            <person name="Pitluck S."/>
            <person name="Sims D."/>
            <person name="Brettin T.S."/>
            <person name="Detter J.C."/>
            <person name="Han C.S."/>
            <person name="Larimer F."/>
            <person name="Hauser L."/>
            <person name="Land M."/>
            <person name="Ivanova N."/>
            <person name="Richardson P."/>
            <person name="Cavicchioli R."/>
            <person name="DasSarma S."/>
            <person name="Woese C.R."/>
            <person name="Kyrpides N.C."/>
        </authorList>
    </citation>
    <scope>NUCLEOTIDE SEQUENCE [LARGE SCALE GENOMIC DNA]</scope>
    <source>
        <strain>ATCC 49239 / DSM 5036 / JCM 8891 / ACAM 34</strain>
    </source>
</reference>
<dbReference type="EC" id="3.6.5.3" evidence="1"/>
<dbReference type="EMBL" id="CP001365">
    <property type="protein sequence ID" value="ACM57973.1"/>
    <property type="molecule type" value="Genomic_DNA"/>
</dbReference>
<dbReference type="RefSeq" id="WP_015911092.1">
    <property type="nucleotide sequence ID" value="NC_012029.1"/>
</dbReference>
<dbReference type="SMR" id="B9LSM6"/>
<dbReference type="GeneID" id="7400516"/>
<dbReference type="KEGG" id="hla:Hlac_2398"/>
<dbReference type="eggNOG" id="arCOG01563">
    <property type="taxonomic scope" value="Archaea"/>
</dbReference>
<dbReference type="HOGENOM" id="CLU_027154_0_1_2"/>
<dbReference type="Proteomes" id="UP000000740">
    <property type="component" value="Chromosome 1"/>
</dbReference>
<dbReference type="GO" id="GO:0005829">
    <property type="term" value="C:cytosol"/>
    <property type="evidence" value="ECO:0007669"/>
    <property type="project" value="TreeGrafter"/>
</dbReference>
<dbReference type="GO" id="GO:0005525">
    <property type="term" value="F:GTP binding"/>
    <property type="evidence" value="ECO:0007669"/>
    <property type="project" value="UniProtKB-UniRule"/>
</dbReference>
<dbReference type="GO" id="GO:0003924">
    <property type="term" value="F:GTPase activity"/>
    <property type="evidence" value="ECO:0007669"/>
    <property type="project" value="InterPro"/>
</dbReference>
<dbReference type="GO" id="GO:0046872">
    <property type="term" value="F:metal ion binding"/>
    <property type="evidence" value="ECO:0007669"/>
    <property type="project" value="UniProtKB-KW"/>
</dbReference>
<dbReference type="GO" id="GO:0003746">
    <property type="term" value="F:translation elongation factor activity"/>
    <property type="evidence" value="ECO:0007669"/>
    <property type="project" value="UniProtKB-UniRule"/>
</dbReference>
<dbReference type="GO" id="GO:0003743">
    <property type="term" value="F:translation initiation factor activity"/>
    <property type="evidence" value="ECO:0007669"/>
    <property type="project" value="UniProtKB-KW"/>
</dbReference>
<dbReference type="GO" id="GO:0000049">
    <property type="term" value="F:tRNA binding"/>
    <property type="evidence" value="ECO:0007669"/>
    <property type="project" value="InterPro"/>
</dbReference>
<dbReference type="GO" id="GO:0001731">
    <property type="term" value="P:formation of translation preinitiation complex"/>
    <property type="evidence" value="ECO:0007669"/>
    <property type="project" value="TreeGrafter"/>
</dbReference>
<dbReference type="CDD" id="cd01888">
    <property type="entry name" value="eIF2_gamma"/>
    <property type="match status" value="1"/>
</dbReference>
<dbReference type="CDD" id="cd03688">
    <property type="entry name" value="eIF2_gamma_II"/>
    <property type="match status" value="1"/>
</dbReference>
<dbReference type="CDD" id="cd15490">
    <property type="entry name" value="eIF2_gamma_III"/>
    <property type="match status" value="1"/>
</dbReference>
<dbReference type="FunFam" id="2.40.30.10:FF:000009">
    <property type="entry name" value="Eukaryotic translation initiation factor 2 subunit gamma"/>
    <property type="match status" value="1"/>
</dbReference>
<dbReference type="FunFam" id="3.40.50.300:FF:000065">
    <property type="entry name" value="Eukaryotic translation initiation factor 2 subunit gamma"/>
    <property type="match status" value="1"/>
</dbReference>
<dbReference type="FunFam" id="2.40.30.10:FF:000075">
    <property type="entry name" value="Translation initiation factor 2 subunit gamma"/>
    <property type="match status" value="1"/>
</dbReference>
<dbReference type="Gene3D" id="3.40.50.300">
    <property type="entry name" value="P-loop containing nucleotide triphosphate hydrolases"/>
    <property type="match status" value="1"/>
</dbReference>
<dbReference type="Gene3D" id="2.40.30.10">
    <property type="entry name" value="Translation factors"/>
    <property type="match status" value="2"/>
</dbReference>
<dbReference type="HAMAP" id="MF_00119">
    <property type="entry name" value="eIF_2_gamma"/>
    <property type="match status" value="1"/>
</dbReference>
<dbReference type="InterPro" id="IPR004161">
    <property type="entry name" value="EFTu-like_2"/>
</dbReference>
<dbReference type="InterPro" id="IPR050543">
    <property type="entry name" value="eIF2G"/>
</dbReference>
<dbReference type="InterPro" id="IPR015256">
    <property type="entry name" value="eIF2g_C"/>
</dbReference>
<dbReference type="InterPro" id="IPR044127">
    <property type="entry name" value="eIF2g_dom_2"/>
</dbReference>
<dbReference type="InterPro" id="IPR044128">
    <property type="entry name" value="eIF2g_GTP-bd"/>
</dbReference>
<dbReference type="InterPro" id="IPR027417">
    <property type="entry name" value="P-loop_NTPase"/>
</dbReference>
<dbReference type="InterPro" id="IPR005225">
    <property type="entry name" value="Small_GTP-bd"/>
</dbReference>
<dbReference type="InterPro" id="IPR000795">
    <property type="entry name" value="T_Tr_GTP-bd_dom"/>
</dbReference>
<dbReference type="InterPro" id="IPR022424">
    <property type="entry name" value="TIF2_gsu"/>
</dbReference>
<dbReference type="InterPro" id="IPR009000">
    <property type="entry name" value="Transl_B-barrel_sf"/>
</dbReference>
<dbReference type="InterPro" id="IPR009001">
    <property type="entry name" value="Transl_elong_EF1A/Init_IF2_C"/>
</dbReference>
<dbReference type="NCBIfam" id="TIGR03680">
    <property type="entry name" value="eif2g_arch"/>
    <property type="match status" value="1"/>
</dbReference>
<dbReference type="NCBIfam" id="NF003077">
    <property type="entry name" value="PRK04000.1"/>
    <property type="match status" value="1"/>
</dbReference>
<dbReference type="NCBIfam" id="TIGR00231">
    <property type="entry name" value="small_GTP"/>
    <property type="match status" value="1"/>
</dbReference>
<dbReference type="PANTHER" id="PTHR42854">
    <property type="entry name" value="EUKARYOTIC TRANSLATION INITIATION FACTOR 2 SUBUNIT 3 FAMILY MEMBER"/>
    <property type="match status" value="1"/>
</dbReference>
<dbReference type="PANTHER" id="PTHR42854:SF3">
    <property type="entry name" value="EUKARYOTIC TRANSLATION INITIATION FACTOR 2 SUBUNIT 3-RELATED"/>
    <property type="match status" value="1"/>
</dbReference>
<dbReference type="Pfam" id="PF09173">
    <property type="entry name" value="eIF2_C"/>
    <property type="match status" value="1"/>
</dbReference>
<dbReference type="Pfam" id="PF00009">
    <property type="entry name" value="GTP_EFTU"/>
    <property type="match status" value="1"/>
</dbReference>
<dbReference type="Pfam" id="PF03144">
    <property type="entry name" value="GTP_EFTU_D2"/>
    <property type="match status" value="1"/>
</dbReference>
<dbReference type="PRINTS" id="PR00315">
    <property type="entry name" value="ELONGATNFCT"/>
</dbReference>
<dbReference type="SUPFAM" id="SSF50465">
    <property type="entry name" value="EF-Tu/eEF-1alpha/eIF2-gamma C-terminal domain"/>
    <property type="match status" value="1"/>
</dbReference>
<dbReference type="SUPFAM" id="SSF52540">
    <property type="entry name" value="P-loop containing nucleoside triphosphate hydrolases"/>
    <property type="match status" value="1"/>
</dbReference>
<dbReference type="SUPFAM" id="SSF50447">
    <property type="entry name" value="Translation proteins"/>
    <property type="match status" value="1"/>
</dbReference>
<dbReference type="PROSITE" id="PS51722">
    <property type="entry name" value="G_TR_2"/>
    <property type="match status" value="1"/>
</dbReference>
<comment type="function">
    <text evidence="1">eIF-2 functions in the early steps of protein synthesis by forming a ternary complex with GTP and initiator tRNA.</text>
</comment>
<comment type="catalytic activity">
    <reaction evidence="1">
        <text>GTP + H2O = GDP + phosphate + H(+)</text>
        <dbReference type="Rhea" id="RHEA:19669"/>
        <dbReference type="ChEBI" id="CHEBI:15377"/>
        <dbReference type="ChEBI" id="CHEBI:15378"/>
        <dbReference type="ChEBI" id="CHEBI:37565"/>
        <dbReference type="ChEBI" id="CHEBI:43474"/>
        <dbReference type="ChEBI" id="CHEBI:58189"/>
        <dbReference type="EC" id="3.6.5.3"/>
    </reaction>
</comment>
<comment type="cofactor">
    <cofactor evidence="1">
        <name>Mg(2+)</name>
        <dbReference type="ChEBI" id="CHEBI:18420"/>
    </cofactor>
</comment>
<comment type="subunit">
    <text evidence="1">Heterotrimer composed of an alpha, a beta and a gamma chain.</text>
</comment>
<comment type="similarity">
    <text evidence="1">Belongs to the TRAFAC class translation factor GTPase superfamily. Classic translation factor GTPase family. EIF2G subfamily.</text>
</comment>
<accession>B9LSM6</accession>
<evidence type="ECO:0000255" key="1">
    <source>
        <dbReference type="HAMAP-Rule" id="MF_00119"/>
    </source>
</evidence>
<protein>
    <recommendedName>
        <fullName evidence="1">Translation initiation factor 2 subunit gamma</fullName>
        <ecNumber evidence="1">3.6.5.3</ecNumber>
    </recommendedName>
    <alternativeName>
        <fullName evidence="1">aIF2-gamma</fullName>
    </alternativeName>
    <alternativeName>
        <fullName evidence="1">eIF-2-gamma</fullName>
    </alternativeName>
</protein>
<feature type="chain" id="PRO_1000122458" description="Translation initiation factor 2 subunit gamma">
    <location>
        <begin position="1"/>
        <end position="412"/>
    </location>
</feature>
<feature type="domain" description="tr-type G" evidence="1">
    <location>
        <begin position="7"/>
        <end position="203"/>
    </location>
</feature>
<feature type="region of interest" description="G1" evidence="1">
    <location>
        <begin position="16"/>
        <end position="23"/>
    </location>
</feature>
<feature type="region of interest" description="G2" evidence="1">
    <location>
        <begin position="44"/>
        <end position="48"/>
    </location>
</feature>
<feature type="region of interest" description="G3" evidence="1">
    <location>
        <begin position="90"/>
        <end position="93"/>
    </location>
</feature>
<feature type="region of interest" description="G4" evidence="1">
    <location>
        <begin position="146"/>
        <end position="149"/>
    </location>
</feature>
<feature type="region of interest" description="G5" evidence="1">
    <location>
        <begin position="181"/>
        <end position="183"/>
    </location>
</feature>
<feature type="binding site" evidence="1">
    <location>
        <begin position="19"/>
        <end position="24"/>
    </location>
    <ligand>
        <name>GTP</name>
        <dbReference type="ChEBI" id="CHEBI:37565"/>
    </ligand>
</feature>
<feature type="binding site" evidence="1">
    <location>
        <position position="19"/>
    </location>
    <ligand>
        <name>Mg(2+)</name>
        <dbReference type="ChEBI" id="CHEBI:18420"/>
        <label>2</label>
    </ligand>
</feature>
<feature type="binding site" evidence="1">
    <location>
        <position position="23"/>
    </location>
    <ligand>
        <name>Mg(2+)</name>
        <dbReference type="ChEBI" id="CHEBI:18420"/>
        <label>1</label>
    </ligand>
</feature>
<feature type="binding site" evidence="1">
    <location>
        <position position="44"/>
    </location>
    <ligand>
        <name>Mg(2+)</name>
        <dbReference type="ChEBI" id="CHEBI:18420"/>
        <label>2</label>
    </ligand>
</feature>
<feature type="binding site" evidence="1">
    <location>
        <position position="46"/>
    </location>
    <ligand>
        <name>Mg(2+)</name>
        <dbReference type="ChEBI" id="CHEBI:18420"/>
        <label>1</label>
    </ligand>
</feature>
<feature type="binding site" evidence="1">
    <location>
        <begin position="146"/>
        <end position="149"/>
    </location>
    <ligand>
        <name>GTP</name>
        <dbReference type="ChEBI" id="CHEBI:37565"/>
    </ligand>
</feature>
<feature type="binding site" evidence="1">
    <location>
        <begin position="181"/>
        <end position="183"/>
    </location>
    <ligand>
        <name>GTP</name>
        <dbReference type="ChEBI" id="CHEBI:37565"/>
    </ligand>
</feature>
<name>IF2G_HALLT</name>
<organism>
    <name type="scientific">Halorubrum lacusprofundi (strain ATCC 49239 / DSM 5036 / JCM 8891 / ACAM 34)</name>
    <dbReference type="NCBI Taxonomy" id="416348"/>
    <lineage>
        <taxon>Archaea</taxon>
        <taxon>Methanobacteriati</taxon>
        <taxon>Methanobacteriota</taxon>
        <taxon>Stenosarchaea group</taxon>
        <taxon>Halobacteria</taxon>
        <taxon>Halobacteriales</taxon>
        <taxon>Haloferacaceae</taxon>
        <taxon>Halorubrum</taxon>
    </lineage>
</organism>
<sequence length="412" mass="43714">MTEVNTQPEVNIGLVGHVDHGKTTLVQALSGSWTDQHSEEMKRGISIRLGYADATFRRCPGVDAPECYTVDEECEDGSESEPIRTVSFVDAPGHETLMATMLSGASIMDGAVLVVSATEDVPQAQTEEHLMALDLIGIENIVIAQNKVDLVDRDRAVDNYRQIQEFVEGTVAEDAPIVPVSAQQEVNMDLLIDAIESEIPTPDRDPGESARMYAARSFDINRPGATAAELKGGVVGGSLVSGELSVGDGLEIRPGREVDEEGQTEWRPLETTVRSLQAGSNDVESARPGGLLGVGTGLDPSLTKGDALAGQVAGEPGTLPPTRNEFEMQVDLLDRVIGSEEGDDGDVEDINTGEPLMLTVGTATTVGAVTSAREGECEVSLKRPVCAEKGAQIAINRRVGARWRLIGVGTLS</sequence>
<proteinExistence type="inferred from homology"/>